<protein>
    <recommendedName>
        <fullName>Putative antiporter subunit mnhF2</fullName>
    </recommendedName>
    <alternativeName>
        <fullName>Mrp complex subunit F2</fullName>
    </alternativeName>
    <alternativeName>
        <fullName>Putative NADH-ubiquinone oxidoreductase subunit mnhF2</fullName>
    </alternativeName>
</protein>
<sequence>MIQTITHIMIISSLIIFGIALIICLFRLIKGPTTADRVVTFDTTSAVVMSIVGVLSVLMGTVSFLDSIMLIAIISFVSSVSISRFIGGGHVFNGNNKRNL</sequence>
<reference key="1">
    <citation type="journal article" date="2002" name="Lancet">
        <title>Genome and virulence determinants of high virulence community-acquired MRSA.</title>
        <authorList>
            <person name="Baba T."/>
            <person name="Takeuchi F."/>
            <person name="Kuroda M."/>
            <person name="Yuzawa H."/>
            <person name="Aoki K."/>
            <person name="Oguchi A."/>
            <person name="Nagai Y."/>
            <person name="Iwama N."/>
            <person name="Asano K."/>
            <person name="Naimi T."/>
            <person name="Kuroda H."/>
            <person name="Cui L."/>
            <person name="Yamamoto K."/>
            <person name="Hiramatsu K."/>
        </authorList>
    </citation>
    <scope>NUCLEOTIDE SEQUENCE [LARGE SCALE GENOMIC DNA]</scope>
    <source>
        <strain>MW2</strain>
    </source>
</reference>
<keyword id="KW-0050">Antiport</keyword>
<keyword id="KW-1003">Cell membrane</keyword>
<keyword id="KW-0406">Ion transport</keyword>
<keyword id="KW-0472">Membrane</keyword>
<keyword id="KW-0812">Transmembrane</keyword>
<keyword id="KW-1133">Transmembrane helix</keyword>
<keyword id="KW-0813">Transport</keyword>
<dbReference type="EMBL" id="BA000033">
    <property type="protein sequence ID" value="BAB94455.1"/>
    <property type="molecule type" value="Genomic_DNA"/>
</dbReference>
<dbReference type="RefSeq" id="WP_000616642.1">
    <property type="nucleotide sequence ID" value="NC_003923.1"/>
</dbReference>
<dbReference type="SMR" id="Q7A1M9"/>
<dbReference type="KEGG" id="sam:MW0590"/>
<dbReference type="HOGENOM" id="CLU_125825_1_3_9"/>
<dbReference type="GO" id="GO:0005886">
    <property type="term" value="C:plasma membrane"/>
    <property type="evidence" value="ECO:0007669"/>
    <property type="project" value="UniProtKB-SubCell"/>
</dbReference>
<dbReference type="GO" id="GO:0015385">
    <property type="term" value="F:sodium:proton antiporter activity"/>
    <property type="evidence" value="ECO:0007669"/>
    <property type="project" value="TreeGrafter"/>
</dbReference>
<dbReference type="InterPro" id="IPR007208">
    <property type="entry name" value="MrpF/PhaF-like"/>
</dbReference>
<dbReference type="NCBIfam" id="NF009300">
    <property type="entry name" value="PRK12657.1"/>
    <property type="match status" value="1"/>
</dbReference>
<dbReference type="PANTHER" id="PTHR34702">
    <property type="entry name" value="NA(+)/H(+) ANTIPORTER SUBUNIT F1"/>
    <property type="match status" value="1"/>
</dbReference>
<dbReference type="PANTHER" id="PTHR34702:SF1">
    <property type="entry name" value="NA(+)_H(+) ANTIPORTER SUBUNIT F"/>
    <property type="match status" value="1"/>
</dbReference>
<dbReference type="Pfam" id="PF04066">
    <property type="entry name" value="MrpF_PhaF"/>
    <property type="match status" value="1"/>
</dbReference>
<dbReference type="PIRSF" id="PIRSF028784">
    <property type="entry name" value="MrpF"/>
    <property type="match status" value="1"/>
</dbReference>
<organism>
    <name type="scientific">Staphylococcus aureus (strain MW2)</name>
    <dbReference type="NCBI Taxonomy" id="196620"/>
    <lineage>
        <taxon>Bacteria</taxon>
        <taxon>Bacillati</taxon>
        <taxon>Bacillota</taxon>
        <taxon>Bacilli</taxon>
        <taxon>Bacillales</taxon>
        <taxon>Staphylococcaceae</taxon>
        <taxon>Staphylococcus</taxon>
    </lineage>
</organism>
<name>MNHF2_STAAW</name>
<gene>
    <name type="primary">mnhF2</name>
    <name type="synonym">mrpF2</name>
    <name type="ordered locus">MW0590</name>
</gene>
<proteinExistence type="inferred from homology"/>
<comment type="subunit">
    <text evidence="1">May form a heterooligomeric complex that consists of seven subunits: mnhA2, mnhB2, mnhC2, mnhD2, mnhE2, mnhF2 and mnhG2.</text>
</comment>
<comment type="subcellular location">
    <subcellularLocation>
        <location evidence="3">Cell membrane</location>
        <topology evidence="3">Multi-pass membrane protein</topology>
    </subcellularLocation>
</comment>
<comment type="similarity">
    <text evidence="3">Belongs to the CPA3 antiporters (TC 2.A.63) subunit F family.</text>
</comment>
<accession>Q7A1M9</accession>
<evidence type="ECO:0000250" key="1"/>
<evidence type="ECO:0000255" key="2"/>
<evidence type="ECO:0000305" key="3"/>
<feature type="chain" id="PRO_0000372199" description="Putative antiporter subunit mnhF2">
    <location>
        <begin position="1"/>
        <end position="100"/>
    </location>
</feature>
<feature type="transmembrane region" description="Helical" evidence="2">
    <location>
        <begin position="5"/>
        <end position="25"/>
    </location>
</feature>
<feature type="transmembrane region" description="Helical" evidence="2">
    <location>
        <begin position="38"/>
        <end position="60"/>
    </location>
</feature>
<feature type="transmembrane region" description="Helical" evidence="2">
    <location>
        <begin position="70"/>
        <end position="92"/>
    </location>
</feature>